<name>PSD8B_ARATH</name>
<dbReference type="EMBL" id="AB017067">
    <property type="protein sequence ID" value="BAB08437.1"/>
    <property type="status" value="ALT_SEQ"/>
    <property type="molecule type" value="Genomic_DNA"/>
</dbReference>
<dbReference type="EMBL" id="CP002688">
    <property type="protein sequence ID" value="AED94758.1"/>
    <property type="molecule type" value="Genomic_DNA"/>
</dbReference>
<dbReference type="EMBL" id="AY258413">
    <property type="protein sequence ID" value="AAP83301.1"/>
    <property type="molecule type" value="mRNA"/>
</dbReference>
<dbReference type="RefSeq" id="NP_199019.2">
    <property type="nucleotide sequence ID" value="NM_123569.3"/>
</dbReference>
<dbReference type="SMR" id="Q9FHY0"/>
<dbReference type="BioGRID" id="19459">
    <property type="interactions" value="96"/>
</dbReference>
<dbReference type="FunCoup" id="Q9FHY0">
    <property type="interactions" value="3798"/>
</dbReference>
<dbReference type="STRING" id="3702.Q9FHY0"/>
<dbReference type="PaxDb" id="3702-AT5G42040.1"/>
<dbReference type="EnsemblPlants" id="AT5G42040.1">
    <property type="protein sequence ID" value="AT5G42040.1"/>
    <property type="gene ID" value="AT5G42040"/>
</dbReference>
<dbReference type="GeneID" id="834209"/>
<dbReference type="Gramene" id="AT5G42040.1">
    <property type="protein sequence ID" value="AT5G42040.1"/>
    <property type="gene ID" value="AT5G42040"/>
</dbReference>
<dbReference type="KEGG" id="ath:AT5G42040"/>
<dbReference type="Araport" id="AT5G42040"/>
<dbReference type="TAIR" id="AT5G42040">
    <property type="gene designation" value="RPN12B"/>
</dbReference>
<dbReference type="eggNOG" id="KOG3151">
    <property type="taxonomic scope" value="Eukaryota"/>
</dbReference>
<dbReference type="HOGENOM" id="CLU_046003_0_0_1"/>
<dbReference type="InParanoid" id="Q9FHY0"/>
<dbReference type="OMA" id="MTIANAN"/>
<dbReference type="PhylomeDB" id="Q9FHY0"/>
<dbReference type="Proteomes" id="UP000006548">
    <property type="component" value="Chromosome 5"/>
</dbReference>
<dbReference type="ExpressionAtlas" id="Q9FHY0">
    <property type="expression patterns" value="baseline and differential"/>
</dbReference>
<dbReference type="GO" id="GO:0009536">
    <property type="term" value="C:plastid"/>
    <property type="evidence" value="ECO:0007005"/>
    <property type="project" value="TAIR"/>
</dbReference>
<dbReference type="GO" id="GO:0005838">
    <property type="term" value="C:proteasome regulatory particle"/>
    <property type="evidence" value="ECO:0007669"/>
    <property type="project" value="InterPro"/>
</dbReference>
<dbReference type="GO" id="GO:0006508">
    <property type="term" value="P:proteolysis"/>
    <property type="evidence" value="ECO:0007669"/>
    <property type="project" value="InterPro"/>
</dbReference>
<dbReference type="Gene3D" id="1.25.40.990">
    <property type="match status" value="1"/>
</dbReference>
<dbReference type="InterPro" id="IPR006746">
    <property type="entry name" value="26S_Psome_Rpn12"/>
</dbReference>
<dbReference type="InterPro" id="IPR033464">
    <property type="entry name" value="CSN8_PSD8_EIF3K"/>
</dbReference>
<dbReference type="InterPro" id="IPR000717">
    <property type="entry name" value="PCI_dom"/>
</dbReference>
<dbReference type="PANTHER" id="PTHR12387">
    <property type="entry name" value="26S PROTEASOME NON-ATPASE REGULATORY SUBUNIT 8"/>
    <property type="match status" value="1"/>
</dbReference>
<dbReference type="PANTHER" id="PTHR12387:SF0">
    <property type="entry name" value="26S PROTEASOME NON-ATPASE REGULATORY SUBUNIT 8"/>
    <property type="match status" value="1"/>
</dbReference>
<dbReference type="Pfam" id="PF10075">
    <property type="entry name" value="CSN8_PSD8_EIF3K"/>
    <property type="match status" value="1"/>
</dbReference>
<dbReference type="PROSITE" id="PS50250">
    <property type="entry name" value="PCI"/>
    <property type="match status" value="1"/>
</dbReference>
<reference key="1">
    <citation type="journal article" date="1999" name="DNA Res.">
        <title>Structural analysis of Arabidopsis thaliana chromosome 5. IX. Sequence features of the regions of 1,011,550 bp covered by seventeen P1 and TAC clones.</title>
        <authorList>
            <person name="Kaneko T."/>
            <person name="Katoh T."/>
            <person name="Sato S."/>
            <person name="Nakamura Y."/>
            <person name="Asamizu E."/>
            <person name="Kotani H."/>
            <person name="Miyajima N."/>
            <person name="Tabata S."/>
        </authorList>
    </citation>
    <scope>NUCLEOTIDE SEQUENCE [LARGE SCALE GENOMIC DNA]</scope>
    <source>
        <strain>cv. Columbia</strain>
    </source>
</reference>
<reference key="2">
    <citation type="journal article" date="2017" name="Plant J.">
        <title>Araport11: a complete reannotation of the Arabidopsis thaliana reference genome.</title>
        <authorList>
            <person name="Cheng C.Y."/>
            <person name="Krishnakumar V."/>
            <person name="Chan A.P."/>
            <person name="Thibaud-Nissen F."/>
            <person name="Schobel S."/>
            <person name="Town C.D."/>
        </authorList>
    </citation>
    <scope>GENOME REANNOTATION</scope>
    <source>
        <strain>cv. Columbia</strain>
    </source>
</reference>
<reference key="3">
    <citation type="journal article" date="2004" name="J. Biol. Chem.">
        <title>Purification of the Arabidopsis 26 S proteasome: biochemical and molecular analyses revealed the presence of multiple isoforms.</title>
        <authorList>
            <person name="Yang P."/>
            <person name="Fu H."/>
            <person name="Walker J."/>
            <person name="Papa C.M."/>
            <person name="Smalle J."/>
            <person name="Ju Y.-M."/>
            <person name="Vierstra R.D."/>
        </authorList>
    </citation>
    <scope>NUCLEOTIDE SEQUENCE [MRNA] OF 75-233</scope>
    <source>
        <strain>cv. Columbia</strain>
    </source>
</reference>
<reference key="4">
    <citation type="journal article" date="2010" name="J. Biol. Chem.">
        <title>Affinity purification of the Arabidopsis 26 S proteasome reveals a diverse array of plant proteolytic complexes.</title>
        <authorList>
            <person name="Book A.J."/>
            <person name="Gladman N.P."/>
            <person name="Lee S.S."/>
            <person name="Scalf M."/>
            <person name="Smith L.M."/>
            <person name="Vierstra R.D."/>
        </authorList>
    </citation>
    <scope>CHARACTERIZATION OF THE 26S PROTEASOME COMPLEX</scope>
    <scope>SUBUNIT</scope>
</reference>
<reference key="5">
    <citation type="journal article" date="2012" name="Plant Signal. Behav.">
        <title>Evidence that the Arabidopsis Ubiquitin C-terminal Hydrolases 1 and 2 associate with the 26S proteasome and the TREX-2 complex.</title>
        <authorList>
            <person name="Tian G."/>
            <person name="Lu Q."/>
            <person name="Kohalmi S.E."/>
            <person name="Rothstein S.J."/>
            <person name="Cui Y."/>
        </authorList>
    </citation>
    <scope>INTERACTION WITH UCH1 AND UCH2</scope>
</reference>
<evidence type="ECO:0000250" key="1">
    <source>
        <dbReference type="UniProtKB" id="Q9SGW3"/>
    </source>
</evidence>
<evidence type="ECO:0000255" key="2">
    <source>
        <dbReference type="PROSITE-ProRule" id="PRU01185"/>
    </source>
</evidence>
<evidence type="ECO:0000269" key="3">
    <source>
    </source>
</evidence>
<evidence type="ECO:0000269" key="4">
    <source>
    </source>
</evidence>
<evidence type="ECO:0000303" key="5">
    <source>
    </source>
</evidence>
<evidence type="ECO:0000305" key="6"/>
<evidence type="ECO:0000305" key="7">
    <source>
    </source>
</evidence>
<evidence type="ECO:0000312" key="8">
    <source>
        <dbReference type="Araport" id="AT5G42040"/>
    </source>
</evidence>
<evidence type="ECO:0000312" key="9">
    <source>
        <dbReference type="EMBL" id="BAB08437.1"/>
    </source>
</evidence>
<organism>
    <name type="scientific">Arabidopsis thaliana</name>
    <name type="common">Mouse-ear cress</name>
    <dbReference type="NCBI Taxonomy" id="3702"/>
    <lineage>
        <taxon>Eukaryota</taxon>
        <taxon>Viridiplantae</taxon>
        <taxon>Streptophyta</taxon>
        <taxon>Embryophyta</taxon>
        <taxon>Tracheophyta</taxon>
        <taxon>Spermatophyta</taxon>
        <taxon>Magnoliopsida</taxon>
        <taxon>eudicotyledons</taxon>
        <taxon>Gunneridae</taxon>
        <taxon>Pentapetalae</taxon>
        <taxon>rosids</taxon>
        <taxon>malvids</taxon>
        <taxon>Brassicales</taxon>
        <taxon>Brassicaceae</taxon>
        <taxon>Camelineae</taxon>
        <taxon>Arabidopsis</taxon>
    </lineage>
</organism>
<protein>
    <recommendedName>
        <fullName>Putative 26S proteasome non-ATPase regulatory subunit 8 homolog B</fullName>
    </recommendedName>
    <alternativeName>
        <fullName evidence="5">26S proteasome regulatory subunit RPN12b</fullName>
        <shortName evidence="5">AtRPN12b</shortName>
    </alternativeName>
    <alternativeName>
        <fullName>26S proteasome regulatory subunit S14 homolog B</fullName>
    </alternativeName>
</protein>
<feature type="chain" id="PRO_0000397123" description="Putative 26S proteasome non-ATPase regulatory subunit 8 homolog B">
    <location>
        <begin position="1"/>
        <end position="233"/>
    </location>
</feature>
<feature type="domain" description="PCI" evidence="2">
    <location>
        <begin position="38"/>
        <end position="217"/>
    </location>
</feature>
<feature type="modified residue" description="N-acetylmethionine" evidence="1">
    <location>
        <position position="1"/>
    </location>
</feature>
<gene>
    <name evidence="5" type="primary">RPN12B</name>
    <name evidence="8" type="ordered locus">At5g42040</name>
    <name evidence="9" type="ORF">MJC20.14</name>
</gene>
<comment type="function">
    <text evidence="1">Acts as a regulatory subunit of the 26S proteasome which is involved in the ATP-dependent degradation of ubiquitinated proteins.</text>
</comment>
<comment type="subunit">
    <text evidence="3 4">Component of the 19S regulatory particle (RP/PA700) lid subcomplex of the 26S proteasome. The 26S proteasome is composed of a core protease (CP), known as the 20S proteasome, capped at one or both ends by the 19S regulatory particle (RP/PA700). The RP/PA700 complex is composed of at least 17 different subunits in two subcomplexes, the base and the lid, which form the portions proximal and distal to the 20S proteolytic core, respectively (PubMed:20516081). Interacts with UCH1 and UCH2 (PubMed:22951400).</text>
</comment>
<comment type="similarity">
    <text evidence="6">Belongs to the proteasome subunit S14 family.</text>
</comment>
<comment type="caution">
    <text evidence="7">Was not identified as subunit of the 26S proteasome complex (PubMed:20516081). Could be the product of a pseudogene.</text>
</comment>
<comment type="sequence caution" evidence="6">
    <conflict type="erroneous gene model prediction">
        <sequence resource="EMBL-CDS" id="BAB08437"/>
    </conflict>
</comment>
<keyword id="KW-0007">Acetylation</keyword>
<keyword id="KW-0647">Proteasome</keyword>
<keyword id="KW-1185">Reference proteome</keyword>
<sequence length="233" mass="26732">MDPQLMEVSQQFERFKAAFIIKDFDTCSSLLSQLKLFDHYLISLSLNALLLLTCALFFLCTRNRIPPSPQENLIMGLNLLRLLVQNRIAEFHTELGLLSSATLENPCIKHAVELEQSFMEGAYNRVLSARQTAPDETYVYFMDLLAKTIRDEIAGCSEKAYDHLSISEGCKMLLFSSDQQLLTYVNEEHPEWEVKDGLVVFQKTRETAPCKEIPSLQLINQTLSYTRELERIL</sequence>
<proteinExistence type="uncertain"/>
<accession>Q9FHY0</accession>